<name>RL11_SYNC1</name>
<gene>
    <name evidence="1" type="primary">rplK</name>
    <name type="ordered locus">Pcar_0690</name>
</gene>
<organism>
    <name type="scientific">Syntrophotalea carbinolica (strain DSM 2380 / NBRC 103641 / GraBd1)</name>
    <name type="common">Pelobacter carbinolicus</name>
    <dbReference type="NCBI Taxonomy" id="338963"/>
    <lineage>
        <taxon>Bacteria</taxon>
        <taxon>Pseudomonadati</taxon>
        <taxon>Thermodesulfobacteriota</taxon>
        <taxon>Desulfuromonadia</taxon>
        <taxon>Desulfuromonadales</taxon>
        <taxon>Syntrophotaleaceae</taxon>
        <taxon>Syntrophotalea</taxon>
    </lineage>
</organism>
<keyword id="KW-0488">Methylation</keyword>
<keyword id="KW-1185">Reference proteome</keyword>
<keyword id="KW-0687">Ribonucleoprotein</keyword>
<keyword id="KW-0689">Ribosomal protein</keyword>
<keyword id="KW-0694">RNA-binding</keyword>
<keyword id="KW-0699">rRNA-binding</keyword>
<reference key="1">
    <citation type="submission" date="2005-10" db="EMBL/GenBank/DDBJ databases">
        <title>Complete sequence of Pelobacter carbinolicus DSM 2380.</title>
        <authorList>
            <person name="Copeland A."/>
            <person name="Lucas S."/>
            <person name="Lapidus A."/>
            <person name="Barry K."/>
            <person name="Detter J.C."/>
            <person name="Glavina T."/>
            <person name="Hammon N."/>
            <person name="Israni S."/>
            <person name="Pitluck S."/>
            <person name="Chertkov O."/>
            <person name="Schmutz J."/>
            <person name="Larimer F."/>
            <person name="Land M."/>
            <person name="Kyrpides N."/>
            <person name="Ivanova N."/>
            <person name="Richardson P."/>
        </authorList>
    </citation>
    <scope>NUCLEOTIDE SEQUENCE [LARGE SCALE GENOMIC DNA]</scope>
    <source>
        <strain>DSM 2380 / NBRC 103641 / GraBd1</strain>
    </source>
</reference>
<comment type="function">
    <text evidence="1">Forms part of the ribosomal stalk which helps the ribosome interact with GTP-bound translation factors.</text>
</comment>
<comment type="subunit">
    <text evidence="1">Part of the ribosomal stalk of the 50S ribosomal subunit. Interacts with L10 and the large rRNA to form the base of the stalk. L10 forms an elongated spine to which L12 dimers bind in a sequential fashion forming a multimeric L10(L12)X complex.</text>
</comment>
<comment type="PTM">
    <text evidence="1">One or more lysine residues are methylated.</text>
</comment>
<comment type="similarity">
    <text evidence="1">Belongs to the universal ribosomal protein uL11 family.</text>
</comment>
<accession>Q3A6Q8</accession>
<protein>
    <recommendedName>
        <fullName evidence="1">Large ribosomal subunit protein uL11</fullName>
    </recommendedName>
    <alternativeName>
        <fullName evidence="2">50S ribosomal protein L11</fullName>
    </alternativeName>
</protein>
<proteinExistence type="inferred from homology"/>
<dbReference type="EMBL" id="CP000142">
    <property type="protein sequence ID" value="ABA87949.1"/>
    <property type="molecule type" value="Genomic_DNA"/>
</dbReference>
<dbReference type="RefSeq" id="WP_011340392.1">
    <property type="nucleotide sequence ID" value="NC_007498.2"/>
</dbReference>
<dbReference type="SMR" id="Q3A6Q8"/>
<dbReference type="STRING" id="338963.Pcar_0690"/>
<dbReference type="KEGG" id="pca:Pcar_0690"/>
<dbReference type="eggNOG" id="COG0080">
    <property type="taxonomic scope" value="Bacteria"/>
</dbReference>
<dbReference type="HOGENOM" id="CLU_074237_2_1_7"/>
<dbReference type="OrthoDB" id="9802408at2"/>
<dbReference type="Proteomes" id="UP000002534">
    <property type="component" value="Chromosome"/>
</dbReference>
<dbReference type="GO" id="GO:0022625">
    <property type="term" value="C:cytosolic large ribosomal subunit"/>
    <property type="evidence" value="ECO:0007669"/>
    <property type="project" value="TreeGrafter"/>
</dbReference>
<dbReference type="GO" id="GO:0070180">
    <property type="term" value="F:large ribosomal subunit rRNA binding"/>
    <property type="evidence" value="ECO:0007669"/>
    <property type="project" value="UniProtKB-UniRule"/>
</dbReference>
<dbReference type="GO" id="GO:0003735">
    <property type="term" value="F:structural constituent of ribosome"/>
    <property type="evidence" value="ECO:0007669"/>
    <property type="project" value="InterPro"/>
</dbReference>
<dbReference type="GO" id="GO:0006412">
    <property type="term" value="P:translation"/>
    <property type="evidence" value="ECO:0007669"/>
    <property type="project" value="UniProtKB-UniRule"/>
</dbReference>
<dbReference type="CDD" id="cd00349">
    <property type="entry name" value="Ribosomal_L11"/>
    <property type="match status" value="1"/>
</dbReference>
<dbReference type="FunFam" id="1.10.10.250:FF:000001">
    <property type="entry name" value="50S ribosomal protein L11"/>
    <property type="match status" value="1"/>
</dbReference>
<dbReference type="FunFam" id="3.30.1550.10:FF:000001">
    <property type="entry name" value="50S ribosomal protein L11"/>
    <property type="match status" value="1"/>
</dbReference>
<dbReference type="Gene3D" id="1.10.10.250">
    <property type="entry name" value="Ribosomal protein L11, C-terminal domain"/>
    <property type="match status" value="1"/>
</dbReference>
<dbReference type="Gene3D" id="3.30.1550.10">
    <property type="entry name" value="Ribosomal protein L11/L12, N-terminal domain"/>
    <property type="match status" value="1"/>
</dbReference>
<dbReference type="HAMAP" id="MF_00736">
    <property type="entry name" value="Ribosomal_uL11"/>
    <property type="match status" value="1"/>
</dbReference>
<dbReference type="InterPro" id="IPR000911">
    <property type="entry name" value="Ribosomal_uL11"/>
</dbReference>
<dbReference type="InterPro" id="IPR006519">
    <property type="entry name" value="Ribosomal_uL11_bac-typ"/>
</dbReference>
<dbReference type="InterPro" id="IPR020783">
    <property type="entry name" value="Ribosomal_uL11_C"/>
</dbReference>
<dbReference type="InterPro" id="IPR036769">
    <property type="entry name" value="Ribosomal_uL11_C_sf"/>
</dbReference>
<dbReference type="InterPro" id="IPR020784">
    <property type="entry name" value="Ribosomal_uL11_N"/>
</dbReference>
<dbReference type="InterPro" id="IPR036796">
    <property type="entry name" value="Ribosomal_uL11_N_sf"/>
</dbReference>
<dbReference type="NCBIfam" id="TIGR01632">
    <property type="entry name" value="L11_bact"/>
    <property type="match status" value="1"/>
</dbReference>
<dbReference type="PANTHER" id="PTHR11661">
    <property type="entry name" value="60S RIBOSOMAL PROTEIN L12"/>
    <property type="match status" value="1"/>
</dbReference>
<dbReference type="PANTHER" id="PTHR11661:SF1">
    <property type="entry name" value="LARGE RIBOSOMAL SUBUNIT PROTEIN UL11M"/>
    <property type="match status" value="1"/>
</dbReference>
<dbReference type="Pfam" id="PF00298">
    <property type="entry name" value="Ribosomal_L11"/>
    <property type="match status" value="1"/>
</dbReference>
<dbReference type="Pfam" id="PF03946">
    <property type="entry name" value="Ribosomal_L11_N"/>
    <property type="match status" value="1"/>
</dbReference>
<dbReference type="SMART" id="SM00649">
    <property type="entry name" value="RL11"/>
    <property type="match status" value="1"/>
</dbReference>
<dbReference type="SUPFAM" id="SSF54747">
    <property type="entry name" value="Ribosomal L11/L12e N-terminal domain"/>
    <property type="match status" value="1"/>
</dbReference>
<dbReference type="SUPFAM" id="SSF46906">
    <property type="entry name" value="Ribosomal protein L11, C-terminal domain"/>
    <property type="match status" value="1"/>
</dbReference>
<sequence>MAKKVVGLIKLQIPAGKANPSPPVGPALGQHGVNIMEFCKAFNAKTQAQDGMIIPVVITVFADRSFSFITKTPPAAVLLMKAAKIPKGSSVPNKDKVGKVTKAQVREIAELKMPDLNAFDIEAAIRTIEGTARSMGLEIV</sequence>
<evidence type="ECO:0000255" key="1">
    <source>
        <dbReference type="HAMAP-Rule" id="MF_00736"/>
    </source>
</evidence>
<evidence type="ECO:0000305" key="2"/>
<feature type="chain" id="PRO_0000258181" description="Large ribosomal subunit protein uL11">
    <location>
        <begin position="1"/>
        <end position="140"/>
    </location>
</feature>